<feature type="chain" id="PRO_0000343815" description="UPF0056 inner membrane protein MarC">
    <location>
        <begin position="1"/>
        <end position="221"/>
    </location>
</feature>
<feature type="topological domain" description="Periplasmic" evidence="2">
    <location>
        <begin position="1"/>
        <end position="7"/>
    </location>
</feature>
<feature type="transmembrane region" description="Helical" evidence="2">
    <location>
        <begin position="8"/>
        <end position="28"/>
    </location>
</feature>
<feature type="topological domain" description="Cytoplasmic" evidence="2">
    <location>
        <begin position="29"/>
        <end position="44"/>
    </location>
</feature>
<feature type="transmembrane region" description="Helical" evidence="2">
    <location>
        <begin position="45"/>
        <end position="65"/>
    </location>
</feature>
<feature type="topological domain" description="Periplasmic" evidence="2">
    <location>
        <begin position="66"/>
        <end position="68"/>
    </location>
</feature>
<feature type="transmembrane region" description="Helical" evidence="2">
    <location>
        <begin position="69"/>
        <end position="89"/>
    </location>
</feature>
<feature type="topological domain" description="Cytoplasmic" evidence="2">
    <location>
        <begin position="90"/>
        <end position="118"/>
    </location>
</feature>
<feature type="transmembrane region" description="Helical" evidence="2">
    <location>
        <begin position="119"/>
        <end position="139"/>
    </location>
</feature>
<feature type="topological domain" description="Periplasmic" evidence="2">
    <location>
        <begin position="140"/>
        <end position="154"/>
    </location>
</feature>
<feature type="transmembrane region" description="Helical" evidence="2">
    <location>
        <begin position="155"/>
        <end position="175"/>
    </location>
</feature>
<feature type="topological domain" description="Cytoplasmic" evidence="2">
    <location>
        <begin position="176"/>
        <end position="196"/>
    </location>
</feature>
<feature type="transmembrane region" description="Helical" evidence="2">
    <location>
        <begin position="197"/>
        <end position="217"/>
    </location>
</feature>
<feature type="topological domain" description="Periplasmic" evidence="2">
    <location>
        <begin position="218"/>
        <end position="221"/>
    </location>
</feature>
<comment type="subcellular location">
    <subcellularLocation>
        <location evidence="1">Cell inner membrane</location>
        <topology evidence="1">Multi-pass membrane protein</topology>
    </subcellularLocation>
</comment>
<comment type="similarity">
    <text evidence="3">Belongs to the UPF0056 (MarC) family.</text>
</comment>
<dbReference type="EMBL" id="CP000243">
    <property type="protein sequence ID" value="ABE07226.1"/>
    <property type="molecule type" value="Genomic_DNA"/>
</dbReference>
<dbReference type="RefSeq" id="WP_000885042.1">
    <property type="nucleotide sequence ID" value="NZ_CP064825.1"/>
</dbReference>
<dbReference type="KEGG" id="eci:UTI89_C1748"/>
<dbReference type="HOGENOM" id="CLU_079909_2_0_6"/>
<dbReference type="Proteomes" id="UP000001952">
    <property type="component" value="Chromosome"/>
</dbReference>
<dbReference type="GO" id="GO:0005886">
    <property type="term" value="C:plasma membrane"/>
    <property type="evidence" value="ECO:0007669"/>
    <property type="project" value="UniProtKB-SubCell"/>
</dbReference>
<dbReference type="InterPro" id="IPR002771">
    <property type="entry name" value="Multi_antbiot-R_MarC"/>
</dbReference>
<dbReference type="NCBIfam" id="TIGR00427">
    <property type="entry name" value="NAAT family transporter"/>
    <property type="match status" value="1"/>
</dbReference>
<dbReference type="NCBIfam" id="NF008228">
    <property type="entry name" value="PRK10995.1"/>
    <property type="match status" value="1"/>
</dbReference>
<dbReference type="PANTHER" id="PTHR33508:SF2">
    <property type="entry name" value="UPF0056 INNER MEMBRANE PROTEIN MARC"/>
    <property type="match status" value="1"/>
</dbReference>
<dbReference type="PANTHER" id="PTHR33508">
    <property type="entry name" value="UPF0056 MEMBRANE PROTEIN YHCE"/>
    <property type="match status" value="1"/>
</dbReference>
<dbReference type="Pfam" id="PF01914">
    <property type="entry name" value="MarC"/>
    <property type="match status" value="1"/>
</dbReference>
<keyword id="KW-0997">Cell inner membrane</keyword>
<keyword id="KW-1003">Cell membrane</keyword>
<keyword id="KW-0472">Membrane</keyword>
<keyword id="KW-0812">Transmembrane</keyword>
<keyword id="KW-1133">Transmembrane helix</keyword>
<evidence type="ECO:0000250" key="1"/>
<evidence type="ECO:0000255" key="2"/>
<evidence type="ECO:0000305" key="3"/>
<protein>
    <recommendedName>
        <fullName>UPF0056 inner membrane protein MarC</fullName>
    </recommendedName>
</protein>
<reference key="1">
    <citation type="journal article" date="2006" name="Proc. Natl. Acad. Sci. U.S.A.">
        <title>Identification of genes subject to positive selection in uropathogenic strains of Escherichia coli: a comparative genomics approach.</title>
        <authorList>
            <person name="Chen S.L."/>
            <person name="Hung C.-S."/>
            <person name="Xu J."/>
            <person name="Reigstad C.S."/>
            <person name="Magrini V."/>
            <person name="Sabo A."/>
            <person name="Blasiar D."/>
            <person name="Bieri T."/>
            <person name="Meyer R.R."/>
            <person name="Ozersky P."/>
            <person name="Armstrong J.R."/>
            <person name="Fulton R.S."/>
            <person name="Latreille J.P."/>
            <person name="Spieth J."/>
            <person name="Hooton T.M."/>
            <person name="Mardis E.R."/>
            <person name="Hultgren S.J."/>
            <person name="Gordon J.I."/>
        </authorList>
    </citation>
    <scope>NUCLEOTIDE SEQUENCE [LARGE SCALE GENOMIC DNA]</scope>
    <source>
        <strain>UTI89 / UPEC</strain>
    </source>
</reference>
<gene>
    <name type="primary">marC</name>
    <name type="ordered locus">UTI89_C1748</name>
</gene>
<proteinExistence type="inferred from homology"/>
<name>MARC_ECOUT</name>
<sequence>MLDLFKAIGLGLVVLLPLANPLTTVALFLGLAGNMSSAERNRQSLMASVYVFAIMMVAYYAGQLVMDTFGISIPGLRIAGGLIVAFIGFRMLFPQQKAIDSPEAKSKSEELEDEPSANIAFVPLAMPSTAGPGTIAMIISSASTVRQSSTFADWVLMVAPPLIFFLVAVILWGSLRSSGAIMRLVGKGGIEAISRLMGFLLVCMGVQFIINGILEIIKTYH</sequence>
<accession>Q1RBN8</accession>
<organism>
    <name type="scientific">Escherichia coli (strain UTI89 / UPEC)</name>
    <dbReference type="NCBI Taxonomy" id="364106"/>
    <lineage>
        <taxon>Bacteria</taxon>
        <taxon>Pseudomonadati</taxon>
        <taxon>Pseudomonadota</taxon>
        <taxon>Gammaproteobacteria</taxon>
        <taxon>Enterobacterales</taxon>
        <taxon>Enterobacteriaceae</taxon>
        <taxon>Escherichia</taxon>
    </lineage>
</organism>